<organism>
    <name type="scientific">Homo sapiens</name>
    <name type="common">Human</name>
    <dbReference type="NCBI Taxonomy" id="9606"/>
    <lineage>
        <taxon>Eukaryota</taxon>
        <taxon>Metazoa</taxon>
        <taxon>Chordata</taxon>
        <taxon>Craniata</taxon>
        <taxon>Vertebrata</taxon>
        <taxon>Euteleostomi</taxon>
        <taxon>Mammalia</taxon>
        <taxon>Eutheria</taxon>
        <taxon>Euarchontoglires</taxon>
        <taxon>Primates</taxon>
        <taxon>Haplorrhini</taxon>
        <taxon>Catarrhini</taxon>
        <taxon>Hominidae</taxon>
        <taxon>Homo</taxon>
    </lineage>
</organism>
<accession>P29508</accession>
<accession>A6NDM2</accession>
<accession>B2RBT5</accession>
<accession>B3W5Y6</accession>
<accession>Q53H28</accession>
<accession>Q53YB5</accession>
<accession>Q86VF3</accession>
<accession>Q86W04</accession>
<accession>Q8IWL4</accession>
<accession>Q8IXI3</accession>
<accession>Q96J21</accession>
<accession>Q9BYF8</accession>
<sequence>MNSLSEANTKFMFDLFQQFRKSKENNIFYSPISITSALGMVLLGAKDNTAQQIKKVLHFDQVTENTTGKAATYHVDRSGNVHHQFQKLLTEFNKSTDAYELKIANKLFGEKTYLFLQEYLDAIKKFYQTSVESVDFANAPEESRKKINSWVESQTNEKIKNLIPEGNIGSNTTLVLVNAIYFKGQWEKKFNKEDTKEEKFWPNKNTYKSIQMMRQYTSFHFASLEDVQAKVLEIPYKGKDLSMIVLLPNEIDGLQKLEEKLTAEKLMEWTSLQNMRETRVDLHLPRFKVEESYDLKDTLRTMGMVDIFNGDADLSGMTGSRGLVLSGVLHKAFVEVTEEGAEAAAATAVVGFGSSPTSTNEEFHCNHPFLFFIRQNKTNSILFYGRFSSP</sequence>
<reference key="1">
    <citation type="journal article" date="1991" name="Biochem. Biophys. Res. Commun.">
        <title>Squamous cell carcinoma antigen is a new member of the serine protease inhibitors.</title>
        <authorList>
            <person name="Suminami Y."/>
            <person name="Kishi F."/>
            <person name="Sekiguchi K."/>
            <person name="Kato H."/>
        </authorList>
    </citation>
    <scope>NUCLEOTIDE SEQUENCE [MRNA] (ISOFORM 1)</scope>
    <scope>PARTIAL PROTEIN SEQUENCE</scope>
    <scope>VARIANT ALA-357</scope>
</reference>
<reference key="2">
    <citation type="journal article" date="1995" name="Proc. Natl. Acad. Sci. U.S.A.">
        <title>A serine proteinase inhibitor locus at 18q21.3 contains a tandem duplication of the human squamous cell carcinoma antigen gene.</title>
        <authorList>
            <person name="Schneider S.S."/>
            <person name="Schick C."/>
            <person name="Fish K.E."/>
            <person name="Miller E."/>
            <person name="Pena J.C."/>
            <person name="Treter S.D."/>
            <person name="Hui S.M."/>
            <person name="Silverman G.A."/>
        </authorList>
    </citation>
    <scope>NUCLEOTIDE SEQUENCE [GENOMIC DNA / MRNA] (ISOFORM 1)</scope>
</reference>
<reference key="3">
    <citation type="submission" date="2000-07" db="EMBL/GenBank/DDBJ databases">
        <title>Novel forms of SCC antigen transcripts produced by alternative splicing.</title>
        <authorList>
            <person name="Suminami Y."/>
            <person name="Kishi F."/>
            <person name="Murakami A."/>
            <person name="Sakaguchi Y."/>
            <person name="Kato H."/>
        </authorList>
    </citation>
    <scope>NUCLEOTIDE SEQUENCE [MRNA] (ISOFORM 2)</scope>
    <scope>VARIANT ALA-357</scope>
</reference>
<reference key="4">
    <citation type="journal article" date="2003" name="J. Biol. Chem.">
        <title>Squamous cell carcinoma antigen 1-mediated binding of hepatitis B virus to hepatocytes does not involve the hepatic serpin clearance system.</title>
        <authorList>
            <person name="Moore P.L."/>
            <person name="Ong S."/>
            <person name="Harrison T.J."/>
        </authorList>
    </citation>
    <scope>NUCLEOTIDE SEQUENCE [MRNA] (ISOFORM 1)</scope>
    <scope>VARIANT ALA-351</scope>
    <scope>MUTAGENESIS OF ALA-341; PHE-352 AND 354-SER-SER-355</scope>
    <source>
        <tissue>Hepatoma</tissue>
    </source>
</reference>
<reference key="5">
    <citation type="submission" date="2003-02" db="EMBL/GenBank/DDBJ databases">
        <title>SCCA1 mRNA sequence from human hepatocellular carcinoma cell line HepG2, complete cds.</title>
        <authorList>
            <person name="Tong C."/>
            <person name="Chenyu X."/>
            <person name="Jun Z."/>
            <person name="Ningshao X."/>
        </authorList>
    </citation>
    <scope>NUCLEOTIDE SEQUENCE [MRNA] (ISOFORM 1)</scope>
    <source>
        <tissue>Hepatoma</tissue>
    </source>
</reference>
<reference key="6">
    <citation type="submission" date="2008-06" db="EMBL/GenBank/DDBJ databases">
        <title>Characterization of the new isoform of squamous cell carcinoma antigen-1 (SCCA-PD) detected in hepatocellular carcinoma.</title>
        <authorList>
            <person name="Turato C."/>
            <person name="Biasiolo A."/>
            <person name="Quarta S."/>
            <person name="Beneduce L."/>
            <person name="Zuin J."/>
            <person name="Fassina G."/>
            <person name="Gatta A."/>
            <person name="Pontisso P."/>
        </authorList>
    </citation>
    <scope>NUCLEOTIDE SEQUENCE [MRNA]</scope>
    <scope>VARIANT ALA-351</scope>
    <source>
        <tissue>Liver</tissue>
    </source>
</reference>
<reference key="7">
    <citation type="submission" date="2003-05" db="EMBL/GenBank/DDBJ databases">
        <title>Cloning of human full-length CDSs in BD Creator(TM) system donor vector.</title>
        <authorList>
            <person name="Kalnine N."/>
            <person name="Chen X."/>
            <person name="Rolfs A."/>
            <person name="Halleck A."/>
            <person name="Hines L."/>
            <person name="Eisenstein S."/>
            <person name="Koundinya M."/>
            <person name="Raphael J."/>
            <person name="Moreira D."/>
            <person name="Kelley T."/>
            <person name="LaBaer J."/>
            <person name="Lin Y."/>
            <person name="Phelan M."/>
            <person name="Farmer A."/>
        </authorList>
    </citation>
    <scope>NUCLEOTIDE SEQUENCE [LARGE SCALE MRNA] (ISOFORM 1)</scope>
</reference>
<reference key="8">
    <citation type="journal article" date="2004" name="Nat. Genet.">
        <title>Complete sequencing and characterization of 21,243 full-length human cDNAs.</title>
        <authorList>
            <person name="Ota T."/>
            <person name="Suzuki Y."/>
            <person name="Nishikawa T."/>
            <person name="Otsuki T."/>
            <person name="Sugiyama T."/>
            <person name="Irie R."/>
            <person name="Wakamatsu A."/>
            <person name="Hayashi K."/>
            <person name="Sato H."/>
            <person name="Nagai K."/>
            <person name="Kimura K."/>
            <person name="Makita H."/>
            <person name="Sekine M."/>
            <person name="Obayashi M."/>
            <person name="Nishi T."/>
            <person name="Shibahara T."/>
            <person name="Tanaka T."/>
            <person name="Ishii S."/>
            <person name="Yamamoto J."/>
            <person name="Saito K."/>
            <person name="Kawai Y."/>
            <person name="Isono Y."/>
            <person name="Nakamura Y."/>
            <person name="Nagahari K."/>
            <person name="Murakami K."/>
            <person name="Yasuda T."/>
            <person name="Iwayanagi T."/>
            <person name="Wagatsuma M."/>
            <person name="Shiratori A."/>
            <person name="Sudo H."/>
            <person name="Hosoiri T."/>
            <person name="Kaku Y."/>
            <person name="Kodaira H."/>
            <person name="Kondo H."/>
            <person name="Sugawara M."/>
            <person name="Takahashi M."/>
            <person name="Kanda K."/>
            <person name="Yokoi T."/>
            <person name="Furuya T."/>
            <person name="Kikkawa E."/>
            <person name="Omura Y."/>
            <person name="Abe K."/>
            <person name="Kamihara K."/>
            <person name="Katsuta N."/>
            <person name="Sato K."/>
            <person name="Tanikawa M."/>
            <person name="Yamazaki M."/>
            <person name="Ninomiya K."/>
            <person name="Ishibashi T."/>
            <person name="Yamashita H."/>
            <person name="Murakawa K."/>
            <person name="Fujimori K."/>
            <person name="Tanai H."/>
            <person name="Kimata M."/>
            <person name="Watanabe M."/>
            <person name="Hiraoka S."/>
            <person name="Chiba Y."/>
            <person name="Ishida S."/>
            <person name="Ono Y."/>
            <person name="Takiguchi S."/>
            <person name="Watanabe S."/>
            <person name="Yosida M."/>
            <person name="Hotuta T."/>
            <person name="Kusano J."/>
            <person name="Kanehori K."/>
            <person name="Takahashi-Fujii A."/>
            <person name="Hara H."/>
            <person name="Tanase T.-O."/>
            <person name="Nomura Y."/>
            <person name="Togiya S."/>
            <person name="Komai F."/>
            <person name="Hara R."/>
            <person name="Takeuchi K."/>
            <person name="Arita M."/>
            <person name="Imose N."/>
            <person name="Musashino K."/>
            <person name="Yuuki H."/>
            <person name="Oshima A."/>
            <person name="Sasaki N."/>
            <person name="Aotsuka S."/>
            <person name="Yoshikawa Y."/>
            <person name="Matsunawa H."/>
            <person name="Ichihara T."/>
            <person name="Shiohata N."/>
            <person name="Sano S."/>
            <person name="Moriya S."/>
            <person name="Momiyama H."/>
            <person name="Satoh N."/>
            <person name="Takami S."/>
            <person name="Terashima Y."/>
            <person name="Suzuki O."/>
            <person name="Nakagawa S."/>
            <person name="Senoh A."/>
            <person name="Mizoguchi H."/>
            <person name="Goto Y."/>
            <person name="Shimizu F."/>
            <person name="Wakebe H."/>
            <person name="Hishigaki H."/>
            <person name="Watanabe T."/>
            <person name="Sugiyama A."/>
            <person name="Takemoto M."/>
            <person name="Kawakami B."/>
            <person name="Yamazaki M."/>
            <person name="Watanabe K."/>
            <person name="Kumagai A."/>
            <person name="Itakura S."/>
            <person name="Fukuzumi Y."/>
            <person name="Fujimori Y."/>
            <person name="Komiyama M."/>
            <person name="Tashiro H."/>
            <person name="Tanigami A."/>
            <person name="Fujiwara T."/>
            <person name="Ono T."/>
            <person name="Yamada K."/>
            <person name="Fujii Y."/>
            <person name="Ozaki K."/>
            <person name="Hirao M."/>
            <person name="Ohmori Y."/>
            <person name="Kawabata A."/>
            <person name="Hikiji T."/>
            <person name="Kobatake N."/>
            <person name="Inagaki H."/>
            <person name="Ikema Y."/>
            <person name="Okamoto S."/>
            <person name="Okitani R."/>
            <person name="Kawakami T."/>
            <person name="Noguchi S."/>
            <person name="Itoh T."/>
            <person name="Shigeta K."/>
            <person name="Senba T."/>
            <person name="Matsumura K."/>
            <person name="Nakajima Y."/>
            <person name="Mizuno T."/>
            <person name="Morinaga M."/>
            <person name="Sasaki M."/>
            <person name="Togashi T."/>
            <person name="Oyama M."/>
            <person name="Hata H."/>
            <person name="Watanabe M."/>
            <person name="Komatsu T."/>
            <person name="Mizushima-Sugano J."/>
            <person name="Satoh T."/>
            <person name="Shirai Y."/>
            <person name="Takahashi Y."/>
            <person name="Nakagawa K."/>
            <person name="Okumura K."/>
            <person name="Nagase T."/>
            <person name="Nomura N."/>
            <person name="Kikuchi H."/>
            <person name="Masuho Y."/>
            <person name="Yamashita R."/>
            <person name="Nakai K."/>
            <person name="Yada T."/>
            <person name="Nakamura Y."/>
            <person name="Ohara O."/>
            <person name="Isogai T."/>
            <person name="Sugano S."/>
        </authorList>
    </citation>
    <scope>NUCLEOTIDE SEQUENCE [LARGE SCALE MRNA] (ISOFORM 1)</scope>
    <source>
        <tissue>Trachea</tissue>
    </source>
</reference>
<reference key="9">
    <citation type="submission" date="2005-04" db="EMBL/GenBank/DDBJ databases">
        <authorList>
            <person name="Suzuki Y."/>
            <person name="Sugano S."/>
            <person name="Totoki Y."/>
            <person name="Toyoda A."/>
            <person name="Takeda T."/>
            <person name="Sakaki Y."/>
            <person name="Tanaka A."/>
            <person name="Yokoyama S."/>
        </authorList>
    </citation>
    <scope>NUCLEOTIDE SEQUENCE [LARGE SCALE MRNA] (ISOFORM 1)</scope>
    <scope>VARIANT ALA-357</scope>
    <source>
        <tissue>Dermoid cancer</tissue>
    </source>
</reference>
<reference key="10">
    <citation type="journal article" date="2005" name="Nature">
        <title>DNA sequence and analysis of human chromosome 18.</title>
        <authorList>
            <person name="Nusbaum C."/>
            <person name="Zody M.C."/>
            <person name="Borowsky M.L."/>
            <person name="Kamal M."/>
            <person name="Kodira C.D."/>
            <person name="Taylor T.D."/>
            <person name="Whittaker C.A."/>
            <person name="Chang J.L."/>
            <person name="Cuomo C.A."/>
            <person name="Dewar K."/>
            <person name="FitzGerald M.G."/>
            <person name="Yang X."/>
            <person name="Abouelleil A."/>
            <person name="Allen N.R."/>
            <person name="Anderson S."/>
            <person name="Bloom T."/>
            <person name="Bugalter B."/>
            <person name="Butler J."/>
            <person name="Cook A."/>
            <person name="DeCaprio D."/>
            <person name="Engels R."/>
            <person name="Garber M."/>
            <person name="Gnirke A."/>
            <person name="Hafez N."/>
            <person name="Hall J.L."/>
            <person name="Norman C.H."/>
            <person name="Itoh T."/>
            <person name="Jaffe D.B."/>
            <person name="Kuroki Y."/>
            <person name="Lehoczky J."/>
            <person name="Lui A."/>
            <person name="Macdonald P."/>
            <person name="Mauceli E."/>
            <person name="Mikkelsen T.S."/>
            <person name="Naylor J.W."/>
            <person name="Nicol R."/>
            <person name="Nguyen C."/>
            <person name="Noguchi H."/>
            <person name="O'Leary S.B."/>
            <person name="Piqani B."/>
            <person name="Smith C.L."/>
            <person name="Talamas J.A."/>
            <person name="Topham K."/>
            <person name="Totoki Y."/>
            <person name="Toyoda A."/>
            <person name="Wain H.M."/>
            <person name="Young S.K."/>
            <person name="Zeng Q."/>
            <person name="Zimmer A.R."/>
            <person name="Fujiyama A."/>
            <person name="Hattori M."/>
            <person name="Birren B.W."/>
            <person name="Sakaki Y."/>
            <person name="Lander E.S."/>
        </authorList>
    </citation>
    <scope>NUCLEOTIDE SEQUENCE [LARGE SCALE GENOMIC DNA]</scope>
</reference>
<reference key="11">
    <citation type="submission" date="2005-07" db="EMBL/GenBank/DDBJ databases">
        <authorList>
            <person name="Mural R.J."/>
            <person name="Istrail S."/>
            <person name="Sutton G.G."/>
            <person name="Florea L."/>
            <person name="Halpern A.L."/>
            <person name="Mobarry C.M."/>
            <person name="Lippert R."/>
            <person name="Walenz B."/>
            <person name="Shatkay H."/>
            <person name="Dew I."/>
            <person name="Miller J.R."/>
            <person name="Flanigan M.J."/>
            <person name="Edwards N.J."/>
            <person name="Bolanos R."/>
            <person name="Fasulo D."/>
            <person name="Halldorsson B.V."/>
            <person name="Hannenhalli S."/>
            <person name="Turner R."/>
            <person name="Yooseph S."/>
            <person name="Lu F."/>
            <person name="Nusskern D.R."/>
            <person name="Shue B.C."/>
            <person name="Zheng X.H."/>
            <person name="Zhong F."/>
            <person name="Delcher A.L."/>
            <person name="Huson D.H."/>
            <person name="Kravitz S.A."/>
            <person name="Mouchard L."/>
            <person name="Reinert K."/>
            <person name="Remington K.A."/>
            <person name="Clark A.G."/>
            <person name="Waterman M.S."/>
            <person name="Eichler E.E."/>
            <person name="Adams M.D."/>
            <person name="Hunkapiller M.W."/>
            <person name="Myers E.W."/>
            <person name="Venter J.C."/>
        </authorList>
    </citation>
    <scope>NUCLEOTIDE SEQUENCE [LARGE SCALE GENOMIC DNA]</scope>
</reference>
<reference key="12">
    <citation type="journal article" date="2004" name="Genome Res.">
        <title>The status, quality, and expansion of the NIH full-length cDNA project: the Mammalian Gene Collection (MGC).</title>
        <authorList>
            <consortium name="The MGC Project Team"/>
        </authorList>
    </citation>
    <scope>NUCLEOTIDE SEQUENCE [LARGE SCALE MRNA] (ISOFORM 1)</scope>
    <source>
        <tissue>Lung</tissue>
    </source>
</reference>
<reference key="13">
    <citation type="submission" date="2008-02" db="UniProtKB">
        <authorList>
            <person name="Bienvenut W.V."/>
            <person name="Bensaad K."/>
            <person name="Vousden K.H."/>
        </authorList>
    </citation>
    <scope>PROTEIN SEQUENCE OF 1-21; 88-94; 112-125; 147-160; 215-260; 266-300; 322-331 AND 378-386</scope>
    <scope>ACETYLATION AT MET-1</scope>
    <scope>IDENTIFICATION BY MASS SPECTROMETRY</scope>
    <source>
        <tissue>Osteosarcoma</tissue>
    </source>
</reference>
<reference key="14">
    <citation type="journal article" date="2004" name="Br. J. Cancer">
        <title>Overexpression of squamous cell carcinoma antigen variants in hepatocellular carcinoma.</title>
        <authorList>
            <person name="Pontisso P."/>
            <person name="Calabrese F."/>
            <person name="Benvegnu L."/>
            <person name="Lise M."/>
            <person name="Belluco C."/>
            <person name="Ruvoletto M.G."/>
            <person name="De Falco S."/>
            <person name="Marino M."/>
            <person name="Valente M."/>
            <person name="Nitti D."/>
            <person name="Gatta A."/>
            <person name="Fassina G."/>
        </authorList>
    </citation>
    <scope>NUCLEOTIDE SEQUENCE [MRNA] OF 109-390 (ISOFORM 1)</scope>
    <scope>VARIANT ALA-351</scope>
    <scope>SUBCELLULAR LOCATION</scope>
    <scope>TISSUE SPECIFICITY</scope>
    <source>
        <tissue>Liver cancer</tissue>
    </source>
</reference>
<reference key="15">
    <citation type="journal article" date="2000" name="Int. J. Cancer">
        <title>Circulating serpin tumor markers SCCA1 and SCCA2 are not actively secreted but reside in the cytosol of squamous carcinoma cells.</title>
        <authorList>
            <person name="Uemura Y."/>
            <person name="Pak S.C."/>
            <person name="Luke C."/>
            <person name="Cataltepe S."/>
            <person name="Tsu C."/>
            <person name="Schick C."/>
            <person name="Kamachi Y."/>
            <person name="Pomeroy S.L."/>
            <person name="Perlmutter D.H."/>
            <person name="Silverman G.A."/>
        </authorList>
    </citation>
    <scope>SUBCELLULAR LOCATION</scope>
</reference>
<reference key="16">
    <citation type="journal article" date="2011" name="BMC Syst. Biol.">
        <title>Initial characterization of the human central proteome.</title>
        <authorList>
            <person name="Burkard T.R."/>
            <person name="Planyavsky M."/>
            <person name="Kaupe I."/>
            <person name="Breitwieser F.P."/>
            <person name="Buerckstuemmer T."/>
            <person name="Bennett K.L."/>
            <person name="Superti-Furga G."/>
            <person name="Colinge J."/>
        </authorList>
    </citation>
    <scope>IDENTIFICATION BY MASS SPECTROMETRY [LARGE SCALE ANALYSIS]</scope>
</reference>
<reference key="17">
    <citation type="journal article" date="2009" name="Biochem. Biophys. Res. Commun.">
        <title>Crystal structure of SCCA1 and insight about the interaction with JNK1.</title>
        <authorList>
            <person name="Zheng B."/>
            <person name="Matoba Y."/>
            <person name="Kumagai T."/>
            <person name="Katagiri C."/>
            <person name="Hibino T."/>
            <person name="Sugiyama M."/>
        </authorList>
    </citation>
    <scope>X-RAY CRYSTALLOGRAPHY (2.7 ANGSTROMS) OF 2-390</scope>
    <scope>FUNCTION</scope>
    <scope>INDUCTION</scope>
    <scope>MUTAGENESIS OF PHE-352</scope>
    <scope>INTERACTION WITH MAPK8</scope>
</reference>
<reference key="18">
    <citation type="journal article" date="2011" name="Exp. Biol. Med.">
        <title>Increased antiprotease activity of the SERPINB3 polymorphic variant SCCA-PD.</title>
        <authorList>
            <person name="Turato C."/>
            <person name="Biasiolo A."/>
            <person name="Pengo P."/>
            <person name="Frecer V."/>
            <person name="Quarta S."/>
            <person name="Fasolato S."/>
            <person name="Ruvoletto M."/>
            <person name="Beneduce L."/>
            <person name="Zuin J."/>
            <person name="Fassina G."/>
            <person name="Gatta A."/>
            <person name="Pontisso P."/>
        </authorList>
    </citation>
    <scope>VARIANT ALA-351</scope>
</reference>
<protein>
    <recommendedName>
        <fullName>Serpin B3</fullName>
    </recommendedName>
    <alternativeName>
        <fullName>Protein T4-A</fullName>
    </alternativeName>
    <alternativeName>
        <fullName>Squamous cell carcinoma antigen 1</fullName>
        <shortName>SCCA-1</shortName>
    </alternativeName>
</protein>
<name>SPB3_HUMAN</name>
<dbReference type="EMBL" id="S66896">
    <property type="protein sequence ID" value="AAB20405.1"/>
    <property type="molecule type" value="mRNA"/>
</dbReference>
<dbReference type="EMBL" id="U19556">
    <property type="protein sequence ID" value="AAA97552.1"/>
    <property type="molecule type" value="mRNA"/>
</dbReference>
<dbReference type="EMBL" id="U19568">
    <property type="protein sequence ID" value="AAA86317.1"/>
    <property type="molecule type" value="Genomic_DNA"/>
</dbReference>
<dbReference type="EMBL" id="U19559">
    <property type="protein sequence ID" value="AAA86317.1"/>
    <property type="status" value="JOINED"/>
    <property type="molecule type" value="Genomic_DNA"/>
</dbReference>
<dbReference type="EMBL" id="U19560">
    <property type="protein sequence ID" value="AAA86317.1"/>
    <property type="status" value="JOINED"/>
    <property type="molecule type" value="Genomic_DNA"/>
</dbReference>
<dbReference type="EMBL" id="U19562">
    <property type="protein sequence ID" value="AAA86317.1"/>
    <property type="status" value="JOINED"/>
    <property type="molecule type" value="Genomic_DNA"/>
</dbReference>
<dbReference type="EMBL" id="U19565">
    <property type="protein sequence ID" value="AAA86317.1"/>
    <property type="status" value="JOINED"/>
    <property type="molecule type" value="Genomic_DNA"/>
</dbReference>
<dbReference type="EMBL" id="U19567">
    <property type="protein sequence ID" value="AAA86317.1"/>
    <property type="status" value="JOINED"/>
    <property type="molecule type" value="Genomic_DNA"/>
</dbReference>
<dbReference type="EMBL" id="U19562">
    <property type="protein sequence ID" value="AAA86316.1"/>
    <property type="molecule type" value="Genomic_DNA"/>
</dbReference>
<dbReference type="EMBL" id="U19559">
    <property type="protein sequence ID" value="AAA86316.1"/>
    <property type="status" value="JOINED"/>
    <property type="molecule type" value="Genomic_DNA"/>
</dbReference>
<dbReference type="EMBL" id="U19560">
    <property type="protein sequence ID" value="AAA86316.1"/>
    <property type="status" value="JOINED"/>
    <property type="molecule type" value="Genomic_DNA"/>
</dbReference>
<dbReference type="EMBL" id="AB046399">
    <property type="protein sequence ID" value="BAB40772.1"/>
    <property type="molecule type" value="mRNA"/>
</dbReference>
<dbReference type="EMBL" id="AJ515706">
    <property type="protein sequence ID" value="CAD56658.1"/>
    <property type="molecule type" value="mRNA"/>
</dbReference>
<dbReference type="EMBL" id="AY245778">
    <property type="protein sequence ID" value="AAO92269.1"/>
    <property type="molecule type" value="mRNA"/>
</dbReference>
<dbReference type="EMBL" id="AY245781">
    <property type="protein sequence ID" value="AAO92272.1"/>
    <property type="molecule type" value="mRNA"/>
</dbReference>
<dbReference type="EMBL" id="EU852041">
    <property type="protein sequence ID" value="ACF21012.1"/>
    <property type="molecule type" value="mRNA"/>
</dbReference>
<dbReference type="EMBL" id="BT006748">
    <property type="protein sequence ID" value="AAP35394.1"/>
    <property type="molecule type" value="mRNA"/>
</dbReference>
<dbReference type="EMBL" id="AK222746">
    <property type="protein sequence ID" value="BAD96466.1"/>
    <property type="molecule type" value="mRNA"/>
</dbReference>
<dbReference type="EMBL" id="AK222753">
    <property type="protein sequence ID" value="BAD96473.1"/>
    <property type="molecule type" value="mRNA"/>
</dbReference>
<dbReference type="EMBL" id="AK314805">
    <property type="protein sequence ID" value="BAG37332.1"/>
    <property type="molecule type" value="mRNA"/>
</dbReference>
<dbReference type="EMBL" id="AC069356">
    <property type="status" value="NOT_ANNOTATED_CDS"/>
    <property type="molecule type" value="Genomic_DNA"/>
</dbReference>
<dbReference type="EMBL" id="CH471096">
    <property type="protein sequence ID" value="EAW63156.1"/>
    <property type="molecule type" value="Genomic_DNA"/>
</dbReference>
<dbReference type="EMBL" id="CH471096">
    <property type="protein sequence ID" value="EAW63157.1"/>
    <property type="molecule type" value="Genomic_DNA"/>
</dbReference>
<dbReference type="EMBL" id="BC005224">
    <property type="protein sequence ID" value="AAH05224.1"/>
    <property type="molecule type" value="mRNA"/>
</dbReference>
<dbReference type="EMBL" id="AY190327">
    <property type="protein sequence ID" value="AAO11731.1"/>
    <property type="status" value="ALT_INIT"/>
    <property type="molecule type" value="mRNA"/>
</dbReference>
<dbReference type="CCDS" id="CCDS11987.1">
    <molecule id="P29508-1"/>
</dbReference>
<dbReference type="PIR" id="I38201">
    <property type="entry name" value="I38201"/>
</dbReference>
<dbReference type="RefSeq" id="NP_008850.1">
    <molecule id="P29508-1"/>
    <property type="nucleotide sequence ID" value="NM_006919.3"/>
</dbReference>
<dbReference type="PDB" id="2ZV6">
    <property type="method" value="X-ray"/>
    <property type="resolution" value="2.70 A"/>
    <property type="chains" value="A/B/C=2-390"/>
</dbReference>
<dbReference type="PDB" id="4ZK0">
    <property type="method" value="X-ray"/>
    <property type="resolution" value="2.15 A"/>
    <property type="chains" value="A=1-390"/>
</dbReference>
<dbReference type="PDB" id="4ZK3">
    <property type="method" value="X-ray"/>
    <property type="resolution" value="2.00 A"/>
    <property type="chains" value="A=1-390"/>
</dbReference>
<dbReference type="PDBsum" id="2ZV6"/>
<dbReference type="PDBsum" id="4ZK0"/>
<dbReference type="PDBsum" id="4ZK3"/>
<dbReference type="SMR" id="P29508"/>
<dbReference type="BioGRID" id="112223">
    <property type="interactions" value="268"/>
</dbReference>
<dbReference type="FunCoup" id="P29508">
    <property type="interactions" value="680"/>
</dbReference>
<dbReference type="IntAct" id="P29508">
    <property type="interactions" value="149"/>
</dbReference>
<dbReference type="MINT" id="P29508"/>
<dbReference type="STRING" id="9606.ENSP00000283752"/>
<dbReference type="DrugBank" id="DB03929">
    <property type="generic name" value="D-Serine"/>
</dbReference>
<dbReference type="DrugBank" id="DB04522">
    <property type="generic name" value="Dexfosfoserine"/>
</dbReference>
<dbReference type="MEROPS" id="I04.008"/>
<dbReference type="GlyCosmos" id="P29508">
    <property type="glycosylation" value="2 sites, 1 glycan"/>
</dbReference>
<dbReference type="GlyGen" id="P29508">
    <property type="glycosylation" value="2 sites, 1 O-linked glycan (2 sites)"/>
</dbReference>
<dbReference type="iPTMnet" id="P29508"/>
<dbReference type="PhosphoSitePlus" id="P29508"/>
<dbReference type="SwissPalm" id="P29508"/>
<dbReference type="BioMuta" id="SERPINB3"/>
<dbReference type="DMDM" id="20141712"/>
<dbReference type="jPOST" id="P29508"/>
<dbReference type="MassIVE" id="P29508"/>
<dbReference type="PaxDb" id="9606-ENSP00000283752"/>
<dbReference type="PeptideAtlas" id="P29508"/>
<dbReference type="PRIDE" id="P29508"/>
<dbReference type="ProteomicsDB" id="54582">
    <molecule id="P29508-1"/>
</dbReference>
<dbReference type="ProteomicsDB" id="54583">
    <molecule id="P29508-2"/>
</dbReference>
<dbReference type="TopDownProteomics" id="P29508-1">
    <molecule id="P29508-1"/>
</dbReference>
<dbReference type="TopDownProteomics" id="P29508-2">
    <molecule id="P29508-2"/>
</dbReference>
<dbReference type="Antibodypedia" id="4364">
    <property type="antibodies" value="737 antibodies from 39 providers"/>
</dbReference>
<dbReference type="CPTC" id="P29508">
    <property type="antibodies" value="3 antibodies"/>
</dbReference>
<dbReference type="DNASU" id="6317"/>
<dbReference type="Ensembl" id="ENST00000283752.10">
    <molecule id="P29508-1"/>
    <property type="protein sequence ID" value="ENSP00000283752.5"/>
    <property type="gene ID" value="ENSG00000057149.16"/>
</dbReference>
<dbReference type="Ensembl" id="ENST00000332821.8">
    <molecule id="P29508-2"/>
    <property type="protein sequence ID" value="ENSP00000329498.8"/>
    <property type="gene ID" value="ENSG00000057149.16"/>
</dbReference>
<dbReference type="GeneID" id="6317"/>
<dbReference type="KEGG" id="hsa:6317"/>
<dbReference type="MANE-Select" id="ENST00000283752.10">
    <property type="protein sequence ID" value="ENSP00000283752.5"/>
    <property type="RefSeq nucleotide sequence ID" value="NM_006919.3"/>
    <property type="RefSeq protein sequence ID" value="NP_008850.1"/>
</dbReference>
<dbReference type="UCSC" id="uc002lji.3">
    <molecule id="P29508-1"/>
    <property type="organism name" value="human"/>
</dbReference>
<dbReference type="AGR" id="HGNC:10569"/>
<dbReference type="CTD" id="6317"/>
<dbReference type="DisGeNET" id="6317"/>
<dbReference type="GeneCards" id="SERPINB3"/>
<dbReference type="HGNC" id="HGNC:10569">
    <property type="gene designation" value="SERPINB3"/>
</dbReference>
<dbReference type="HPA" id="ENSG00000057149">
    <property type="expression patterns" value="Group enriched (cervix, esophagus, vagina)"/>
</dbReference>
<dbReference type="MIM" id="600517">
    <property type="type" value="gene"/>
</dbReference>
<dbReference type="neXtProt" id="NX_P29508"/>
<dbReference type="OpenTargets" id="ENSG00000057149"/>
<dbReference type="PharmGKB" id="PA35538"/>
<dbReference type="VEuPathDB" id="HostDB:ENSG00000057149"/>
<dbReference type="eggNOG" id="KOG2392">
    <property type="taxonomic scope" value="Eukaryota"/>
</dbReference>
<dbReference type="GeneTree" id="ENSGT00940000154520"/>
<dbReference type="HOGENOM" id="CLU_023330_0_2_1"/>
<dbReference type="InParanoid" id="P29508"/>
<dbReference type="OMA" id="IANRMYA"/>
<dbReference type="OrthoDB" id="671595at2759"/>
<dbReference type="PAN-GO" id="P29508">
    <property type="GO annotations" value="3 GO annotations based on evolutionary models"/>
</dbReference>
<dbReference type="PhylomeDB" id="P29508"/>
<dbReference type="TreeFam" id="TF352619"/>
<dbReference type="PathwayCommons" id="P29508"/>
<dbReference type="Reactome" id="R-HSA-6798695">
    <property type="pathway name" value="Neutrophil degranulation"/>
</dbReference>
<dbReference type="SignaLink" id="P29508"/>
<dbReference type="BioGRID-ORCS" id="6317">
    <property type="hits" value="15 hits in 1117 CRISPR screens"/>
</dbReference>
<dbReference type="CD-CODE" id="232F8A39">
    <property type="entry name" value="P-body"/>
</dbReference>
<dbReference type="CD-CODE" id="91857CE7">
    <property type="entry name" value="Nucleolus"/>
</dbReference>
<dbReference type="ChiTaRS" id="SERPINB3">
    <property type="organism name" value="human"/>
</dbReference>
<dbReference type="EvolutionaryTrace" id="P29508"/>
<dbReference type="GeneWiki" id="SERPINB3"/>
<dbReference type="GenomeRNAi" id="6317"/>
<dbReference type="Pharos" id="P29508">
    <property type="development level" value="Tbio"/>
</dbReference>
<dbReference type="PRO" id="PR:P29508"/>
<dbReference type="Proteomes" id="UP000005640">
    <property type="component" value="Chromosome 18"/>
</dbReference>
<dbReference type="RNAct" id="P29508">
    <property type="molecule type" value="protein"/>
</dbReference>
<dbReference type="Bgee" id="ENSG00000057149">
    <property type="expression patterns" value="Expressed in olfactory segment of nasal mucosa and 117 other cell types or tissues"/>
</dbReference>
<dbReference type="GO" id="GO:0035578">
    <property type="term" value="C:azurophil granule lumen"/>
    <property type="evidence" value="ECO:0000304"/>
    <property type="project" value="Reactome"/>
</dbReference>
<dbReference type="GO" id="GO:0005737">
    <property type="term" value="C:cytoplasm"/>
    <property type="evidence" value="ECO:0000314"/>
    <property type="project" value="UniProtKB"/>
</dbReference>
<dbReference type="GO" id="GO:0031410">
    <property type="term" value="C:cytoplasmic vesicle"/>
    <property type="evidence" value="ECO:0000314"/>
    <property type="project" value="UniProtKB"/>
</dbReference>
<dbReference type="GO" id="GO:0005829">
    <property type="term" value="C:cytosol"/>
    <property type="evidence" value="ECO:0000314"/>
    <property type="project" value="HPA"/>
</dbReference>
<dbReference type="GO" id="GO:0070062">
    <property type="term" value="C:extracellular exosome"/>
    <property type="evidence" value="ECO:0007005"/>
    <property type="project" value="UniProtKB"/>
</dbReference>
<dbReference type="GO" id="GO:0005576">
    <property type="term" value="C:extracellular region"/>
    <property type="evidence" value="ECO:0000304"/>
    <property type="project" value="Reactome"/>
</dbReference>
<dbReference type="GO" id="GO:0005615">
    <property type="term" value="C:extracellular space"/>
    <property type="evidence" value="ECO:0000318"/>
    <property type="project" value="GO_Central"/>
</dbReference>
<dbReference type="GO" id="GO:0005634">
    <property type="term" value="C:nucleus"/>
    <property type="evidence" value="ECO:0000314"/>
    <property type="project" value="UniProtKB"/>
</dbReference>
<dbReference type="GO" id="GO:0005886">
    <property type="term" value="C:plasma membrane"/>
    <property type="evidence" value="ECO:0000314"/>
    <property type="project" value="HPA"/>
</dbReference>
<dbReference type="GO" id="GO:0031982">
    <property type="term" value="C:vesicle"/>
    <property type="evidence" value="ECO:0007005"/>
    <property type="project" value="UniProtKB"/>
</dbReference>
<dbReference type="GO" id="GO:0004869">
    <property type="term" value="F:cysteine-type endopeptidase inhibitor activity"/>
    <property type="evidence" value="ECO:0000315"/>
    <property type="project" value="UniProtKB"/>
</dbReference>
<dbReference type="GO" id="GO:0002020">
    <property type="term" value="F:protease binding"/>
    <property type="evidence" value="ECO:0000353"/>
    <property type="project" value="UniProtKB"/>
</dbReference>
<dbReference type="GO" id="GO:0004867">
    <property type="term" value="F:serine-type endopeptidase inhibitor activity"/>
    <property type="evidence" value="ECO:0000318"/>
    <property type="project" value="GO_Central"/>
</dbReference>
<dbReference type="GO" id="GO:0001618">
    <property type="term" value="F:virus receptor activity"/>
    <property type="evidence" value="ECO:0000314"/>
    <property type="project" value="UniProtKB"/>
</dbReference>
<dbReference type="GO" id="GO:0035425">
    <property type="term" value="P:autocrine signaling"/>
    <property type="evidence" value="ECO:0000315"/>
    <property type="project" value="UniProtKB"/>
</dbReference>
<dbReference type="GO" id="GO:0043086">
    <property type="term" value="P:negative regulation of catalytic activity"/>
    <property type="evidence" value="ECO:0000314"/>
    <property type="project" value="UniProtKB"/>
</dbReference>
<dbReference type="GO" id="GO:0010951">
    <property type="term" value="P:negative regulation of endopeptidase activity"/>
    <property type="evidence" value="ECO:0000315"/>
    <property type="project" value="UniProtKB"/>
</dbReference>
<dbReference type="GO" id="GO:0043508">
    <property type="term" value="P:negative regulation of JUN kinase activity"/>
    <property type="evidence" value="ECO:0000315"/>
    <property type="project" value="UniProtKB"/>
</dbReference>
<dbReference type="GO" id="GO:0010466">
    <property type="term" value="P:negative regulation of peptidase activity"/>
    <property type="evidence" value="ECO:0000314"/>
    <property type="project" value="UniProtKB"/>
</dbReference>
<dbReference type="GO" id="GO:0045861">
    <property type="term" value="P:negative regulation of proteolysis"/>
    <property type="evidence" value="ECO:0000314"/>
    <property type="project" value="UniProtKB"/>
</dbReference>
<dbReference type="GO" id="GO:0038001">
    <property type="term" value="P:paracrine signaling"/>
    <property type="evidence" value="ECO:0000315"/>
    <property type="project" value="UniProtKB"/>
</dbReference>
<dbReference type="GO" id="GO:0030335">
    <property type="term" value="P:positive regulation of cell migration"/>
    <property type="evidence" value="ECO:0000315"/>
    <property type="project" value="UniProtKB"/>
</dbReference>
<dbReference type="GO" id="GO:0008284">
    <property type="term" value="P:positive regulation of cell population proliferation"/>
    <property type="evidence" value="ECO:0000315"/>
    <property type="project" value="UniProtKB"/>
</dbReference>
<dbReference type="GO" id="GO:0010950">
    <property type="term" value="P:positive regulation of endopeptidase activity"/>
    <property type="evidence" value="ECO:0000314"/>
    <property type="project" value="UniProtKB"/>
</dbReference>
<dbReference type="GO" id="GO:0010718">
    <property type="term" value="P:positive regulation of epithelial to mesenchymal transition"/>
    <property type="evidence" value="ECO:0000315"/>
    <property type="project" value="UniProtKB"/>
</dbReference>
<dbReference type="CDD" id="cd19563">
    <property type="entry name" value="serpinB3_B4_SCCA1_2"/>
    <property type="match status" value="1"/>
</dbReference>
<dbReference type="FunFam" id="2.30.39.10:FF:000071">
    <property type="entry name" value="Serpin B3"/>
    <property type="match status" value="1"/>
</dbReference>
<dbReference type="FunFam" id="2.10.310.10:FF:000001">
    <property type="entry name" value="Serpin family A member 1"/>
    <property type="match status" value="1"/>
</dbReference>
<dbReference type="FunFam" id="3.30.497.10:FF:000004">
    <property type="entry name" value="Serpin family B member 1"/>
    <property type="match status" value="1"/>
</dbReference>
<dbReference type="Gene3D" id="2.30.39.10">
    <property type="entry name" value="Alpha-1-antitrypsin, domain 1"/>
    <property type="match status" value="1"/>
</dbReference>
<dbReference type="Gene3D" id="3.30.497.10">
    <property type="entry name" value="Antithrombin, subunit I, domain 2"/>
    <property type="match status" value="1"/>
</dbReference>
<dbReference type="InterPro" id="IPR023795">
    <property type="entry name" value="Serpin_CS"/>
</dbReference>
<dbReference type="InterPro" id="IPR023796">
    <property type="entry name" value="Serpin_dom"/>
</dbReference>
<dbReference type="InterPro" id="IPR000215">
    <property type="entry name" value="Serpin_fam"/>
</dbReference>
<dbReference type="InterPro" id="IPR036186">
    <property type="entry name" value="Serpin_sf"/>
</dbReference>
<dbReference type="InterPro" id="IPR042178">
    <property type="entry name" value="Serpin_sf_1"/>
</dbReference>
<dbReference type="InterPro" id="IPR042185">
    <property type="entry name" value="Serpin_sf_2"/>
</dbReference>
<dbReference type="PANTHER" id="PTHR11461">
    <property type="entry name" value="SERINE PROTEASE INHIBITOR, SERPIN"/>
    <property type="match status" value="1"/>
</dbReference>
<dbReference type="PANTHER" id="PTHR11461:SF320">
    <property type="entry name" value="SERPIN B3"/>
    <property type="match status" value="1"/>
</dbReference>
<dbReference type="Pfam" id="PF00079">
    <property type="entry name" value="Serpin"/>
    <property type="match status" value="1"/>
</dbReference>
<dbReference type="SMART" id="SM00093">
    <property type="entry name" value="SERPIN"/>
    <property type="match status" value="1"/>
</dbReference>
<dbReference type="SUPFAM" id="SSF56574">
    <property type="entry name" value="Serpins"/>
    <property type="match status" value="1"/>
</dbReference>
<dbReference type="PROSITE" id="PS00284">
    <property type="entry name" value="SERPIN"/>
    <property type="match status" value="1"/>
</dbReference>
<gene>
    <name type="primary">SERPINB3</name>
    <name type="synonym">SCCA</name>
    <name type="synonym">SCCA1</name>
</gene>
<feature type="chain" id="PRO_0000094103" description="Serpin B3">
    <location>
        <begin position="1"/>
        <end position="390"/>
    </location>
</feature>
<feature type="site" description="Reactive bond">
    <location>
        <begin position="354"/>
        <end position="355"/>
    </location>
</feature>
<feature type="modified residue" description="N-acetylmethionine" evidence="7">
    <location>
        <position position="1"/>
    </location>
</feature>
<feature type="splice variant" id="VSP_032657" description="In isoform 2." evidence="11">
    <location>
        <begin position="205"/>
        <end position="256"/>
    </location>
</feature>
<feature type="sequence variant" id="VAR_024351" description="Increased antiprotease activity and increased MAPK8 inhibition activity; dbSNP:rs3180227." evidence="2 3 6 9">
    <original>G</original>
    <variation>A</variation>
    <location>
        <position position="351"/>
    </location>
</feature>
<feature type="sequence variant" id="VAR_024352" description="In dbSNP:rs1065205." evidence="5 8 10">
    <original>T</original>
    <variation>A</variation>
    <location>
        <position position="357"/>
    </location>
</feature>
<feature type="mutagenesis site" description="Loss of inhibitory activity." evidence="2">
    <original>A</original>
    <variation>R</variation>
    <location>
        <position position="341"/>
    </location>
</feature>
<feature type="mutagenesis site" description="Loss of inhibitory activity." evidence="2 4">
    <original>F</original>
    <variation>A</variation>
    <location>
        <position position="352"/>
    </location>
</feature>
<feature type="mutagenesis site" description="Loss of inhibitory activity to papain but does not decrease the suppression activity to MAPK8." evidence="2 4">
    <original>F</original>
    <variation>G</variation>
    <location>
        <position position="352"/>
    </location>
</feature>
<feature type="mutagenesis site" description="Loss of inhibitory activity." evidence="2">
    <original>SS</original>
    <variation>PP</variation>
    <location>
        <begin position="354"/>
        <end position="355"/>
    </location>
</feature>
<feature type="sequence conflict" description="In Ref. 4; CAD56658." evidence="12" ref="4">
    <original>F</original>
    <variation>S</variation>
    <location>
        <position position="16"/>
    </location>
</feature>
<feature type="sequence conflict" description="In Ref. 4; CAD56658." evidence="12" ref="4">
    <original>D</original>
    <variation>N</variation>
    <location>
        <position position="47"/>
    </location>
</feature>
<feature type="sequence conflict" description="In Ref. 4; CAD56658." evidence="12" ref="4">
    <original>N</original>
    <variation>T</variation>
    <location>
        <position position="105"/>
    </location>
</feature>
<feature type="sequence conflict" description="In Ref. 5; AAO92272." evidence="12" ref="5">
    <original>Q</original>
    <variation>R</variation>
    <location>
        <position position="185"/>
    </location>
</feature>
<feature type="sequence conflict" description="In Ref. 5; AAO92272." evidence="12" ref="5">
    <original>P</original>
    <variation>S</variation>
    <location>
        <position position="202"/>
    </location>
</feature>
<feature type="sequence conflict" description="In Ref. 5; AAO92269." evidence="12" ref="5">
    <original>T</original>
    <variation>A</variation>
    <location>
        <position position="278"/>
    </location>
</feature>
<feature type="sequence conflict" description="In Ref. 5; AAO92272." evidence="12" ref="5">
    <original>V</original>
    <variation>E</variation>
    <location>
        <position position="349"/>
    </location>
</feature>
<feature type="helix" evidence="14">
    <location>
        <begin position="4"/>
        <end position="19"/>
    </location>
</feature>
<feature type="strand" evidence="14">
    <location>
        <begin position="27"/>
        <end position="29"/>
    </location>
</feature>
<feature type="helix" evidence="14">
    <location>
        <begin position="31"/>
        <end position="42"/>
    </location>
</feature>
<feature type="helix" evidence="14">
    <location>
        <begin position="47"/>
        <end position="56"/>
    </location>
</feature>
<feature type="helix" evidence="14">
    <location>
        <begin position="59"/>
        <end position="61"/>
    </location>
</feature>
<feature type="helix" evidence="14">
    <location>
        <begin position="81"/>
        <end position="91"/>
    </location>
</feature>
<feature type="strand" evidence="14">
    <location>
        <begin position="97"/>
        <end position="110"/>
    </location>
</feature>
<feature type="helix" evidence="14">
    <location>
        <begin position="117"/>
        <end position="127"/>
    </location>
</feature>
<feature type="strand" evidence="14">
    <location>
        <begin position="130"/>
        <end position="134"/>
    </location>
</feature>
<feature type="turn" evidence="14">
    <location>
        <begin position="136"/>
        <end position="138"/>
    </location>
</feature>
<feature type="helix" evidence="14">
    <location>
        <begin position="140"/>
        <end position="153"/>
    </location>
</feature>
<feature type="turn" evidence="14">
    <location>
        <begin position="154"/>
        <end position="157"/>
    </location>
</feature>
<feature type="turn" evidence="13">
    <location>
        <begin position="165"/>
        <end position="167"/>
    </location>
</feature>
<feature type="strand" evidence="14">
    <location>
        <begin position="174"/>
        <end position="188"/>
    </location>
</feature>
<feature type="helix" evidence="14">
    <location>
        <begin position="192"/>
        <end position="194"/>
    </location>
</feature>
<feature type="strand" evidence="14">
    <location>
        <begin position="196"/>
        <end position="203"/>
    </location>
</feature>
<feature type="strand" evidence="14">
    <location>
        <begin position="206"/>
        <end position="224"/>
    </location>
</feature>
<feature type="turn" evidence="14">
    <location>
        <begin position="225"/>
        <end position="228"/>
    </location>
</feature>
<feature type="strand" evidence="14">
    <location>
        <begin position="229"/>
        <end position="236"/>
    </location>
</feature>
<feature type="strand" evidence="14">
    <location>
        <begin position="239"/>
        <end position="250"/>
    </location>
</feature>
<feature type="turn" evidence="14">
    <location>
        <begin position="251"/>
        <end position="253"/>
    </location>
</feature>
<feature type="helix" evidence="14">
    <location>
        <begin position="254"/>
        <end position="260"/>
    </location>
</feature>
<feature type="helix" evidence="14">
    <location>
        <begin position="263"/>
        <end position="269"/>
    </location>
</feature>
<feature type="helix" evidence="14">
    <location>
        <begin position="272"/>
        <end position="274"/>
    </location>
</feature>
<feature type="strand" evidence="14">
    <location>
        <begin position="276"/>
        <end position="285"/>
    </location>
</feature>
<feature type="strand" evidence="14">
    <location>
        <begin position="287"/>
        <end position="294"/>
    </location>
</feature>
<feature type="helix" evidence="14">
    <location>
        <begin position="296"/>
        <end position="302"/>
    </location>
</feature>
<feature type="helix" evidence="14">
    <location>
        <begin position="306"/>
        <end position="308"/>
    </location>
</feature>
<feature type="helix" evidence="14">
    <location>
        <begin position="315"/>
        <end position="318"/>
    </location>
</feature>
<feature type="strand" evidence="14">
    <location>
        <begin position="319"/>
        <end position="321"/>
    </location>
</feature>
<feature type="strand" evidence="14">
    <location>
        <begin position="324"/>
        <end position="336"/>
    </location>
</feature>
<feature type="strand" evidence="14">
    <location>
        <begin position="338"/>
        <end position="352"/>
    </location>
</feature>
<feature type="strand" evidence="14">
    <location>
        <begin position="361"/>
        <end position="364"/>
    </location>
</feature>
<feature type="strand" evidence="14">
    <location>
        <begin position="369"/>
        <end position="375"/>
    </location>
</feature>
<feature type="turn" evidence="14">
    <location>
        <begin position="376"/>
        <end position="379"/>
    </location>
</feature>
<feature type="strand" evidence="14">
    <location>
        <begin position="380"/>
        <end position="387"/>
    </location>
</feature>
<evidence type="ECO:0000269" key="1">
    <source>
    </source>
</evidence>
<evidence type="ECO:0000269" key="2">
    <source>
    </source>
</evidence>
<evidence type="ECO:0000269" key="3">
    <source>
    </source>
</evidence>
<evidence type="ECO:0000269" key="4">
    <source>
    </source>
</evidence>
<evidence type="ECO:0000269" key="5">
    <source>
    </source>
</evidence>
<evidence type="ECO:0000269" key="6">
    <source>
    </source>
</evidence>
<evidence type="ECO:0000269" key="7">
    <source ref="13"/>
</evidence>
<evidence type="ECO:0000269" key="8">
    <source ref="3"/>
</evidence>
<evidence type="ECO:0000269" key="9">
    <source ref="6"/>
</evidence>
<evidence type="ECO:0000269" key="10">
    <source ref="9"/>
</evidence>
<evidence type="ECO:0000303" key="11">
    <source ref="3"/>
</evidence>
<evidence type="ECO:0000305" key="12"/>
<evidence type="ECO:0007829" key="13">
    <source>
        <dbReference type="PDB" id="2ZV6"/>
    </source>
</evidence>
<evidence type="ECO:0007829" key="14">
    <source>
        <dbReference type="PDB" id="4ZK3"/>
    </source>
</evidence>
<keyword id="KW-0002">3D-structure</keyword>
<keyword id="KW-0007">Acetylation</keyword>
<keyword id="KW-0025">Alternative splicing</keyword>
<keyword id="KW-0963">Cytoplasm</keyword>
<keyword id="KW-0903">Direct protein sequencing</keyword>
<keyword id="KW-0646">Protease inhibitor</keyword>
<keyword id="KW-1267">Proteomics identification</keyword>
<keyword id="KW-1185">Reference proteome</keyword>
<keyword id="KW-0722">Serine protease inhibitor</keyword>
<proteinExistence type="evidence at protein level"/>
<comment type="function">
    <text evidence="4">May act as a papain-like cysteine protease inhibitor to modulate the host immune response against tumor cells. Also functions as an inhibitor of UV-induced apoptosis via suppression of the activity of c-Jun NH(2)-terminal kinase (JNK1).</text>
</comment>
<comment type="subunit">
    <text evidence="4">Interacts with MAPK8/JNK1.</text>
</comment>
<comment type="interaction">
    <interactant intactId="EBI-359110">
        <id>P29508</id>
    </interactant>
    <interactant intactId="EBI-1055490">
        <id>P48594</id>
        <label>SERPINB4</label>
    </interactant>
    <organismsDiffer>false</organismsDiffer>
    <experiments>5</experiments>
</comment>
<comment type="subcellular location">
    <subcellularLocation>
        <location evidence="1 3">Cytoplasm</location>
    </subcellularLocation>
    <text>Seems to also be secreted in plasma by cancerous cells but at a low level.</text>
</comment>
<comment type="alternative products">
    <event type="alternative splicing"/>
    <isoform>
        <id>P29508-1</id>
        <name>1</name>
        <sequence type="displayed"/>
    </isoform>
    <isoform>
        <id>P29508-2</id>
        <name>2</name>
        <name>SCCA1b</name>
        <sequence type="described" ref="VSP_032657"/>
    </isoform>
</comment>
<comment type="tissue specificity">
    <text evidence="3">Squamous cells. Expressed in some hepatocellular carcinoma (at protein level).</text>
</comment>
<comment type="developmental stage">
    <text>Its expression is closely related to cellular differentiation in both normal and malignant squamous cells.</text>
</comment>
<comment type="induction">
    <text evidence="4">Strongly up-regulated in the upper epidermis of sun-exposed skin.</text>
</comment>
<comment type="similarity">
    <text evidence="12">Belongs to the serpin family. Ov-serpin subfamily.</text>
</comment>
<comment type="sequence caution" evidence="12">
    <conflict type="erroneous initiation">
        <sequence resource="EMBL-CDS" id="AAO11731"/>
    </conflict>
</comment>